<accession>B8I7Y3</accession>
<organism>
    <name type="scientific">Ruminiclostridium cellulolyticum (strain ATCC 35319 / DSM 5812 / JCM 6584 / H10)</name>
    <name type="common">Clostridium cellulolyticum</name>
    <dbReference type="NCBI Taxonomy" id="394503"/>
    <lineage>
        <taxon>Bacteria</taxon>
        <taxon>Bacillati</taxon>
        <taxon>Bacillota</taxon>
        <taxon>Clostridia</taxon>
        <taxon>Eubacteriales</taxon>
        <taxon>Oscillospiraceae</taxon>
        <taxon>Ruminiclostridium</taxon>
    </lineage>
</organism>
<keyword id="KW-1185">Reference proteome</keyword>
<keyword id="KW-0687">Ribonucleoprotein</keyword>
<keyword id="KW-0689">Ribosomal protein</keyword>
<keyword id="KW-0694">RNA-binding</keyword>
<keyword id="KW-0699">rRNA-binding</keyword>
<proteinExistence type="inferred from homology"/>
<evidence type="ECO:0000255" key="1">
    <source>
        <dbReference type="HAMAP-Rule" id="MF_00531"/>
    </source>
</evidence>
<evidence type="ECO:0000305" key="2"/>
<dbReference type="EMBL" id="CP001348">
    <property type="protein sequence ID" value="ACL75140.1"/>
    <property type="molecule type" value="Genomic_DNA"/>
</dbReference>
<dbReference type="RefSeq" id="WP_015924305.1">
    <property type="nucleotide sequence ID" value="NC_011898.1"/>
</dbReference>
<dbReference type="SMR" id="B8I7Y3"/>
<dbReference type="STRING" id="394503.Ccel_0762"/>
<dbReference type="KEGG" id="cce:Ccel_0762"/>
<dbReference type="eggNOG" id="COG0185">
    <property type="taxonomic scope" value="Bacteria"/>
</dbReference>
<dbReference type="HOGENOM" id="CLU_144911_0_1_9"/>
<dbReference type="OrthoDB" id="9797833at2"/>
<dbReference type="Proteomes" id="UP000001349">
    <property type="component" value="Chromosome"/>
</dbReference>
<dbReference type="GO" id="GO:0005737">
    <property type="term" value="C:cytoplasm"/>
    <property type="evidence" value="ECO:0007669"/>
    <property type="project" value="UniProtKB-ARBA"/>
</dbReference>
<dbReference type="GO" id="GO:0015935">
    <property type="term" value="C:small ribosomal subunit"/>
    <property type="evidence" value="ECO:0007669"/>
    <property type="project" value="InterPro"/>
</dbReference>
<dbReference type="GO" id="GO:0019843">
    <property type="term" value="F:rRNA binding"/>
    <property type="evidence" value="ECO:0007669"/>
    <property type="project" value="UniProtKB-UniRule"/>
</dbReference>
<dbReference type="GO" id="GO:0003735">
    <property type="term" value="F:structural constituent of ribosome"/>
    <property type="evidence" value="ECO:0007669"/>
    <property type="project" value="InterPro"/>
</dbReference>
<dbReference type="GO" id="GO:0000028">
    <property type="term" value="P:ribosomal small subunit assembly"/>
    <property type="evidence" value="ECO:0007669"/>
    <property type="project" value="TreeGrafter"/>
</dbReference>
<dbReference type="GO" id="GO:0006412">
    <property type="term" value="P:translation"/>
    <property type="evidence" value="ECO:0007669"/>
    <property type="project" value="UniProtKB-UniRule"/>
</dbReference>
<dbReference type="FunFam" id="3.30.860.10:FF:000001">
    <property type="entry name" value="30S ribosomal protein S19"/>
    <property type="match status" value="1"/>
</dbReference>
<dbReference type="Gene3D" id="3.30.860.10">
    <property type="entry name" value="30s Ribosomal Protein S19, Chain A"/>
    <property type="match status" value="1"/>
</dbReference>
<dbReference type="HAMAP" id="MF_00531">
    <property type="entry name" value="Ribosomal_uS19"/>
    <property type="match status" value="1"/>
</dbReference>
<dbReference type="InterPro" id="IPR002222">
    <property type="entry name" value="Ribosomal_uS19"/>
</dbReference>
<dbReference type="InterPro" id="IPR005732">
    <property type="entry name" value="Ribosomal_uS19_bac-type"/>
</dbReference>
<dbReference type="InterPro" id="IPR020934">
    <property type="entry name" value="Ribosomal_uS19_CS"/>
</dbReference>
<dbReference type="InterPro" id="IPR023575">
    <property type="entry name" value="Ribosomal_uS19_SF"/>
</dbReference>
<dbReference type="NCBIfam" id="TIGR01050">
    <property type="entry name" value="rpsS_bact"/>
    <property type="match status" value="1"/>
</dbReference>
<dbReference type="PANTHER" id="PTHR11880">
    <property type="entry name" value="RIBOSOMAL PROTEIN S19P FAMILY MEMBER"/>
    <property type="match status" value="1"/>
</dbReference>
<dbReference type="PANTHER" id="PTHR11880:SF8">
    <property type="entry name" value="SMALL RIBOSOMAL SUBUNIT PROTEIN US19M"/>
    <property type="match status" value="1"/>
</dbReference>
<dbReference type="Pfam" id="PF00203">
    <property type="entry name" value="Ribosomal_S19"/>
    <property type="match status" value="1"/>
</dbReference>
<dbReference type="PIRSF" id="PIRSF002144">
    <property type="entry name" value="Ribosomal_S19"/>
    <property type="match status" value="1"/>
</dbReference>
<dbReference type="PRINTS" id="PR00975">
    <property type="entry name" value="RIBOSOMALS19"/>
</dbReference>
<dbReference type="SUPFAM" id="SSF54570">
    <property type="entry name" value="Ribosomal protein S19"/>
    <property type="match status" value="1"/>
</dbReference>
<dbReference type="PROSITE" id="PS00323">
    <property type="entry name" value="RIBOSOMAL_S19"/>
    <property type="match status" value="1"/>
</dbReference>
<sequence>MSRSVKKGPYVLDSLLKKIEEMNKANDKKVIKTWSRASTIFPQMVGHTIAVHDGKKHVPVYITEDMVGHKLGEFAPTRTYKGHSGNEKSTSLR</sequence>
<gene>
    <name evidence="1" type="primary">rpsS</name>
    <name type="ordered locus">Ccel_0762</name>
</gene>
<comment type="function">
    <text evidence="1">Protein S19 forms a complex with S13 that binds strongly to the 16S ribosomal RNA.</text>
</comment>
<comment type="similarity">
    <text evidence="1">Belongs to the universal ribosomal protein uS19 family.</text>
</comment>
<reference key="1">
    <citation type="submission" date="2009-01" db="EMBL/GenBank/DDBJ databases">
        <title>Complete sequence of Clostridium cellulolyticum H10.</title>
        <authorList>
            <consortium name="US DOE Joint Genome Institute"/>
            <person name="Lucas S."/>
            <person name="Copeland A."/>
            <person name="Lapidus A."/>
            <person name="Glavina del Rio T."/>
            <person name="Dalin E."/>
            <person name="Tice H."/>
            <person name="Bruce D."/>
            <person name="Goodwin L."/>
            <person name="Pitluck S."/>
            <person name="Chertkov O."/>
            <person name="Saunders E."/>
            <person name="Brettin T."/>
            <person name="Detter J.C."/>
            <person name="Han C."/>
            <person name="Larimer F."/>
            <person name="Land M."/>
            <person name="Hauser L."/>
            <person name="Kyrpides N."/>
            <person name="Ivanova N."/>
            <person name="Zhou J."/>
            <person name="Richardson P."/>
        </authorList>
    </citation>
    <scope>NUCLEOTIDE SEQUENCE [LARGE SCALE GENOMIC DNA]</scope>
    <source>
        <strain>ATCC 35319 / DSM 5812 / JCM 6584 / H10</strain>
    </source>
</reference>
<name>RS19_RUMCH</name>
<feature type="chain" id="PRO_1000146381" description="Small ribosomal subunit protein uS19">
    <location>
        <begin position="1"/>
        <end position="93"/>
    </location>
</feature>
<protein>
    <recommendedName>
        <fullName evidence="1">Small ribosomal subunit protein uS19</fullName>
    </recommendedName>
    <alternativeName>
        <fullName evidence="2">30S ribosomal protein S19</fullName>
    </alternativeName>
</protein>